<evidence type="ECO:0000255" key="1">
    <source>
        <dbReference type="HAMAP-Rule" id="MF_00912"/>
    </source>
</evidence>
<evidence type="ECO:0000255" key="2">
    <source>
        <dbReference type="PROSITE-ProRule" id="PRU01115"/>
    </source>
</evidence>
<comment type="function">
    <text evidence="1">Cell division protein that may be involved in stabilizing or promoting the assembly of the division complex.</text>
</comment>
<comment type="subcellular location">
    <subcellularLocation>
        <location evidence="1">Cell membrane</location>
        <topology evidence="1">Single-pass type II membrane protein</topology>
    </subcellularLocation>
    <text evidence="1">Localizes to the division septum.</text>
</comment>
<comment type="similarity">
    <text evidence="1">Belongs to the FtsQ/DivIB family. DivIB subfamily.</text>
</comment>
<organism>
    <name type="scientific">Clostridium botulinum (strain Loch Maree / Type A3)</name>
    <dbReference type="NCBI Taxonomy" id="498214"/>
    <lineage>
        <taxon>Bacteria</taxon>
        <taxon>Bacillati</taxon>
        <taxon>Bacillota</taxon>
        <taxon>Clostridia</taxon>
        <taxon>Eubacteriales</taxon>
        <taxon>Clostridiaceae</taxon>
        <taxon>Clostridium</taxon>
    </lineage>
</organism>
<feature type="chain" id="PRO_0000414763" description="Cell division protein DivIB">
    <location>
        <begin position="1"/>
        <end position="256"/>
    </location>
</feature>
<feature type="topological domain" description="Cytoplasmic" evidence="1">
    <location>
        <begin position="1"/>
        <end position="23"/>
    </location>
</feature>
<feature type="transmembrane region" description="Helical" evidence="1">
    <location>
        <begin position="24"/>
        <end position="44"/>
    </location>
</feature>
<feature type="topological domain" description="Extracellular" evidence="1">
    <location>
        <begin position="45"/>
        <end position="256"/>
    </location>
</feature>
<feature type="domain" description="POTRA" evidence="2">
    <location>
        <begin position="45"/>
        <end position="113"/>
    </location>
</feature>
<name>DIVIB_CLOBM</name>
<dbReference type="EMBL" id="CP000962">
    <property type="protein sequence ID" value="ACA55170.1"/>
    <property type="molecule type" value="Genomic_DNA"/>
</dbReference>
<dbReference type="RefSeq" id="WP_012343191.1">
    <property type="nucleotide sequence ID" value="NC_010520.1"/>
</dbReference>
<dbReference type="SMR" id="B1L171"/>
<dbReference type="KEGG" id="cbl:CLK_0942"/>
<dbReference type="HOGENOM" id="CLU_047677_4_2_9"/>
<dbReference type="GO" id="GO:0032153">
    <property type="term" value="C:cell division site"/>
    <property type="evidence" value="ECO:0007669"/>
    <property type="project" value="UniProtKB-UniRule"/>
</dbReference>
<dbReference type="GO" id="GO:0005886">
    <property type="term" value="C:plasma membrane"/>
    <property type="evidence" value="ECO:0007669"/>
    <property type="project" value="UniProtKB-SubCell"/>
</dbReference>
<dbReference type="GO" id="GO:0043093">
    <property type="term" value="P:FtsZ-dependent cytokinesis"/>
    <property type="evidence" value="ECO:0007669"/>
    <property type="project" value="UniProtKB-UniRule"/>
</dbReference>
<dbReference type="Gene3D" id="3.10.20.310">
    <property type="entry name" value="membrane protein fhac"/>
    <property type="match status" value="1"/>
</dbReference>
<dbReference type="HAMAP" id="MF_00912">
    <property type="entry name" value="DivIB"/>
    <property type="match status" value="1"/>
</dbReference>
<dbReference type="InterPro" id="IPR005548">
    <property type="entry name" value="Cell_div_FtsQ/DivIB_C"/>
</dbReference>
<dbReference type="InterPro" id="IPR026580">
    <property type="entry name" value="DivIB"/>
</dbReference>
<dbReference type="InterPro" id="IPR050487">
    <property type="entry name" value="FtsQ_DivIB"/>
</dbReference>
<dbReference type="InterPro" id="IPR034746">
    <property type="entry name" value="POTRA"/>
</dbReference>
<dbReference type="InterPro" id="IPR013685">
    <property type="entry name" value="POTRA_FtsQ_type"/>
</dbReference>
<dbReference type="PANTHER" id="PTHR37820">
    <property type="entry name" value="CELL DIVISION PROTEIN DIVIB"/>
    <property type="match status" value="1"/>
</dbReference>
<dbReference type="PANTHER" id="PTHR37820:SF1">
    <property type="entry name" value="CELL DIVISION PROTEIN FTSQ"/>
    <property type="match status" value="1"/>
</dbReference>
<dbReference type="Pfam" id="PF03799">
    <property type="entry name" value="FtsQ_DivIB_C"/>
    <property type="match status" value="1"/>
</dbReference>
<dbReference type="Pfam" id="PF08478">
    <property type="entry name" value="POTRA_1"/>
    <property type="match status" value="1"/>
</dbReference>
<dbReference type="PROSITE" id="PS51779">
    <property type="entry name" value="POTRA"/>
    <property type="match status" value="1"/>
</dbReference>
<reference key="1">
    <citation type="journal article" date="2007" name="PLoS ONE">
        <title>Analysis of the neurotoxin complex genes in Clostridium botulinum A1-A4 and B1 strains: BoNT/A3, /Ba4 and /B1 clusters are located within plasmids.</title>
        <authorList>
            <person name="Smith T.J."/>
            <person name="Hill K.K."/>
            <person name="Foley B.T."/>
            <person name="Detter J.C."/>
            <person name="Munk A.C."/>
            <person name="Bruce D.C."/>
            <person name="Doggett N.A."/>
            <person name="Smith L.A."/>
            <person name="Marks J.D."/>
            <person name="Xie G."/>
            <person name="Brettin T.S."/>
        </authorList>
    </citation>
    <scope>NUCLEOTIDE SEQUENCE [LARGE SCALE GENOMIC DNA]</scope>
    <source>
        <strain>Loch Maree / Type A3</strain>
    </source>
</reference>
<gene>
    <name evidence="1" type="primary">divIB</name>
    <name type="ordered locus">CLK_0942</name>
</gene>
<sequence>MSKDLISTDEYIKIKKKRKRIKKIVVLFIFLISILVTLCLKIPYFNIESIEIKGNVNIPKEIIKDSSTIKTGNNIFYTNKKDAIENISLNPYIEEVKITKKLPNKLEIYVKEREALFYNKVDKDFFIISKNGCLLEKRKEIKNMKLINLQGFEFNESKIGSALKAKDERGVKILNDFGVLLKNNASDVIFTQLDLRNLLDIRIYSNGICVKIGTSDQIEKKLNTAINILKRDELKKAKKGYVDVSYEGNPVFYIEK</sequence>
<protein>
    <recommendedName>
        <fullName evidence="1">Cell division protein DivIB</fullName>
    </recommendedName>
</protein>
<accession>B1L171</accession>
<keyword id="KW-0131">Cell cycle</keyword>
<keyword id="KW-0132">Cell division</keyword>
<keyword id="KW-1003">Cell membrane</keyword>
<keyword id="KW-0472">Membrane</keyword>
<keyword id="KW-0812">Transmembrane</keyword>
<keyword id="KW-1133">Transmembrane helix</keyword>
<proteinExistence type="inferred from homology"/>